<dbReference type="EMBL" id="AY358245">
    <property type="protein sequence ID" value="AAQ88612.1"/>
    <property type="molecule type" value="mRNA"/>
</dbReference>
<dbReference type="BioMuta" id="UNQ6190/PRO20217"/>
<dbReference type="jPOST" id="Q6UXQ8"/>
<dbReference type="neXtProt" id="NX_Q6UXQ8"/>
<dbReference type="InParanoid" id="Q6UXQ8"/>
<dbReference type="PAN-GO" id="Q6UXQ8">
    <property type="GO annotations" value="0 GO annotations based on evolutionary models"/>
</dbReference>
<dbReference type="Pharos" id="Q6UXQ8">
    <property type="development level" value="Tdark"/>
</dbReference>
<dbReference type="Proteomes" id="UP000005640">
    <property type="component" value="Unplaced"/>
</dbReference>
<dbReference type="RNAct" id="Q6UXQ8">
    <property type="molecule type" value="protein"/>
</dbReference>
<dbReference type="GO" id="GO:0005576">
    <property type="term" value="C:extracellular region"/>
    <property type="evidence" value="ECO:0007669"/>
    <property type="project" value="UniProtKB-SubCell"/>
</dbReference>
<name>YO002_HUMAN</name>
<reference key="1">
    <citation type="journal article" date="2003" name="Genome Res.">
        <title>The secreted protein discovery initiative (SPDI), a large-scale effort to identify novel human secreted and transmembrane proteins: a bioinformatics assessment.</title>
        <authorList>
            <person name="Clark H.F."/>
            <person name="Gurney A.L."/>
            <person name="Abaya E."/>
            <person name="Baker K."/>
            <person name="Baldwin D.T."/>
            <person name="Brush J."/>
            <person name="Chen J."/>
            <person name="Chow B."/>
            <person name="Chui C."/>
            <person name="Crowley C."/>
            <person name="Currell B."/>
            <person name="Deuel B."/>
            <person name="Dowd P."/>
            <person name="Eaton D."/>
            <person name="Foster J.S."/>
            <person name="Grimaldi C."/>
            <person name="Gu Q."/>
            <person name="Hass P.E."/>
            <person name="Heldens S."/>
            <person name="Huang A."/>
            <person name="Kim H.S."/>
            <person name="Klimowski L."/>
            <person name="Jin Y."/>
            <person name="Johnson S."/>
            <person name="Lee J."/>
            <person name="Lewis L."/>
            <person name="Liao D."/>
            <person name="Mark M.R."/>
            <person name="Robbie E."/>
            <person name="Sanchez C."/>
            <person name="Schoenfeld J."/>
            <person name="Seshagiri S."/>
            <person name="Simmons L."/>
            <person name="Singh J."/>
            <person name="Smith V."/>
            <person name="Stinson J."/>
            <person name="Vagts A."/>
            <person name="Vandlen R.L."/>
            <person name="Watanabe C."/>
            <person name="Wieand D."/>
            <person name="Woods K."/>
            <person name="Xie M.-H."/>
            <person name="Yansura D.G."/>
            <person name="Yi S."/>
            <person name="Yu G."/>
            <person name="Yuan J."/>
            <person name="Zhang M."/>
            <person name="Zhang Z."/>
            <person name="Goddard A.D."/>
            <person name="Wood W.I."/>
            <person name="Godowski P.J."/>
            <person name="Gray A.M."/>
        </authorList>
    </citation>
    <scope>NUCLEOTIDE SEQUENCE [LARGE SCALE MRNA]</scope>
</reference>
<keyword id="KW-1185">Reference proteome</keyword>
<keyword id="KW-0964">Secreted</keyword>
<keyword id="KW-0732">Signal</keyword>
<sequence>MAGVRARAPLPLALLLSLPAAPGGRDPSASRARFPQRLGRAPCFEVGLRKPPPPPLLSPPSFSSGSSRPLQRPRGPKDGAGRKVCAKLVKRLPGESGSCEDGQSAPAQPPRRRTGTRACPPRAPLWR</sequence>
<comment type="subcellular location">
    <subcellularLocation>
        <location evidence="3">Secreted</location>
    </subcellularLocation>
</comment>
<comment type="caution">
    <text evidence="3">Product of a dubious CDS prediction.</text>
</comment>
<feature type="signal peptide" evidence="1">
    <location>
        <begin position="1"/>
        <end position="23"/>
    </location>
</feature>
<feature type="chain" id="PRO_0000317735" description="Putative uncharacterized protein UNQ6190/PRO20217">
    <location>
        <begin position="24"/>
        <end position="127"/>
    </location>
</feature>
<feature type="region of interest" description="Disordered" evidence="2">
    <location>
        <begin position="43"/>
        <end position="127"/>
    </location>
</feature>
<feature type="compositionally biased region" description="Low complexity" evidence="2">
    <location>
        <begin position="59"/>
        <end position="70"/>
    </location>
</feature>
<organism>
    <name type="scientific">Homo sapiens</name>
    <name type="common">Human</name>
    <dbReference type="NCBI Taxonomy" id="9606"/>
    <lineage>
        <taxon>Eukaryota</taxon>
        <taxon>Metazoa</taxon>
        <taxon>Chordata</taxon>
        <taxon>Craniata</taxon>
        <taxon>Vertebrata</taxon>
        <taxon>Euteleostomi</taxon>
        <taxon>Mammalia</taxon>
        <taxon>Eutheria</taxon>
        <taxon>Euarchontoglires</taxon>
        <taxon>Primates</taxon>
        <taxon>Haplorrhini</taxon>
        <taxon>Catarrhini</taxon>
        <taxon>Hominidae</taxon>
        <taxon>Homo</taxon>
    </lineage>
</organism>
<proteinExistence type="uncertain"/>
<protein>
    <recommendedName>
        <fullName>Putative uncharacterized protein UNQ6190/PRO20217</fullName>
    </recommendedName>
</protein>
<gene>
    <name type="ORF">UNQ6190/PRO20217</name>
</gene>
<accession>Q6UXQ8</accession>
<evidence type="ECO:0000255" key="1"/>
<evidence type="ECO:0000256" key="2">
    <source>
        <dbReference type="SAM" id="MobiDB-lite"/>
    </source>
</evidence>
<evidence type="ECO:0000305" key="3"/>